<reference key="1">
    <citation type="journal article" date="1990" name="EMBO J.">
        <title>Identification of ras-related, YPT family genes in Schizosaccharomyces pombe.</title>
        <authorList>
            <person name="Miyake S."/>
            <person name="Yamamoto M."/>
        </authorList>
    </citation>
    <scope>NUCLEOTIDE SEQUENCE [GENOMIC DNA]</scope>
</reference>
<reference key="2">
    <citation type="journal article" date="1989" name="Nucleic Acids Res.">
        <title>Nucleotide sequence of a gene encoding a YPT1-related protein from Schizosaccharomyces pombe.</title>
        <authorList>
            <person name="Fawell E."/>
            <person name="Hook S."/>
            <person name="Armstrong J."/>
        </authorList>
    </citation>
    <scope>NUCLEOTIDE SEQUENCE [GENOMIC DNA]</scope>
</reference>
<reference key="3">
    <citation type="journal article" date="2002" name="Nature">
        <title>The genome sequence of Schizosaccharomyces pombe.</title>
        <authorList>
            <person name="Wood V."/>
            <person name="Gwilliam R."/>
            <person name="Rajandream M.A."/>
            <person name="Lyne M.H."/>
            <person name="Lyne R."/>
            <person name="Stewart A."/>
            <person name="Sgouros J.G."/>
            <person name="Peat N."/>
            <person name="Hayles J."/>
            <person name="Baker S.G."/>
            <person name="Basham D."/>
            <person name="Bowman S."/>
            <person name="Brooks K."/>
            <person name="Brown D."/>
            <person name="Brown S."/>
            <person name="Chillingworth T."/>
            <person name="Churcher C.M."/>
            <person name="Collins M."/>
            <person name="Connor R."/>
            <person name="Cronin A."/>
            <person name="Davis P."/>
            <person name="Feltwell T."/>
            <person name="Fraser A."/>
            <person name="Gentles S."/>
            <person name="Goble A."/>
            <person name="Hamlin N."/>
            <person name="Harris D.E."/>
            <person name="Hidalgo J."/>
            <person name="Hodgson G."/>
            <person name="Holroyd S."/>
            <person name="Hornsby T."/>
            <person name="Howarth S."/>
            <person name="Huckle E.J."/>
            <person name="Hunt S."/>
            <person name="Jagels K."/>
            <person name="James K.D."/>
            <person name="Jones L."/>
            <person name="Jones M."/>
            <person name="Leather S."/>
            <person name="McDonald S."/>
            <person name="McLean J."/>
            <person name="Mooney P."/>
            <person name="Moule S."/>
            <person name="Mungall K.L."/>
            <person name="Murphy L.D."/>
            <person name="Niblett D."/>
            <person name="Odell C."/>
            <person name="Oliver K."/>
            <person name="O'Neil S."/>
            <person name="Pearson D."/>
            <person name="Quail M.A."/>
            <person name="Rabbinowitsch E."/>
            <person name="Rutherford K.M."/>
            <person name="Rutter S."/>
            <person name="Saunders D."/>
            <person name="Seeger K."/>
            <person name="Sharp S."/>
            <person name="Skelton J."/>
            <person name="Simmonds M.N."/>
            <person name="Squares R."/>
            <person name="Squares S."/>
            <person name="Stevens K."/>
            <person name="Taylor K."/>
            <person name="Taylor R.G."/>
            <person name="Tivey A."/>
            <person name="Walsh S.V."/>
            <person name="Warren T."/>
            <person name="Whitehead S."/>
            <person name="Woodward J.R."/>
            <person name="Volckaert G."/>
            <person name="Aert R."/>
            <person name="Robben J."/>
            <person name="Grymonprez B."/>
            <person name="Weltjens I."/>
            <person name="Vanstreels E."/>
            <person name="Rieger M."/>
            <person name="Schaefer M."/>
            <person name="Mueller-Auer S."/>
            <person name="Gabel C."/>
            <person name="Fuchs M."/>
            <person name="Duesterhoeft A."/>
            <person name="Fritzc C."/>
            <person name="Holzer E."/>
            <person name="Moestl D."/>
            <person name="Hilbert H."/>
            <person name="Borzym K."/>
            <person name="Langer I."/>
            <person name="Beck A."/>
            <person name="Lehrach H."/>
            <person name="Reinhardt R."/>
            <person name="Pohl T.M."/>
            <person name="Eger P."/>
            <person name="Zimmermann W."/>
            <person name="Wedler H."/>
            <person name="Wambutt R."/>
            <person name="Purnelle B."/>
            <person name="Goffeau A."/>
            <person name="Cadieu E."/>
            <person name="Dreano S."/>
            <person name="Gloux S."/>
            <person name="Lelaure V."/>
            <person name="Mottier S."/>
            <person name="Galibert F."/>
            <person name="Aves S.J."/>
            <person name="Xiang Z."/>
            <person name="Hunt C."/>
            <person name="Moore K."/>
            <person name="Hurst S.M."/>
            <person name="Lucas M."/>
            <person name="Rochet M."/>
            <person name="Gaillardin C."/>
            <person name="Tallada V.A."/>
            <person name="Garzon A."/>
            <person name="Thode G."/>
            <person name="Daga R.R."/>
            <person name="Cruzado L."/>
            <person name="Jimenez J."/>
            <person name="Sanchez M."/>
            <person name="del Rey F."/>
            <person name="Benito J."/>
            <person name="Dominguez A."/>
            <person name="Revuelta J.L."/>
            <person name="Moreno S."/>
            <person name="Armstrong J."/>
            <person name="Forsburg S.L."/>
            <person name="Cerutti L."/>
            <person name="Lowe T."/>
            <person name="McCombie W.R."/>
            <person name="Paulsen I."/>
            <person name="Potashkin J."/>
            <person name="Shpakovski G.V."/>
            <person name="Ussery D."/>
            <person name="Barrell B.G."/>
            <person name="Nurse P."/>
        </authorList>
    </citation>
    <scope>NUCLEOTIDE SEQUENCE [LARGE SCALE GENOMIC DNA]</scope>
    <source>
        <strain>972 / ATCC 24843</strain>
    </source>
</reference>
<reference key="4">
    <citation type="journal article" date="1992" name="J. Biol. Chem.">
        <title>Post-translational processing of Schizosaccharomyces pombe YPT proteins.</title>
        <authorList>
            <person name="Newman C.M."/>
            <person name="Giannakouros T."/>
            <person name="Hancock J.F."/>
            <person name="Fawell E.H."/>
            <person name="Armstrong J."/>
            <person name="Magee A.I."/>
        </authorList>
    </citation>
    <scope>ISOPRENYLATION AT CYS-202 AND CYS-203</scope>
</reference>
<reference key="5">
    <citation type="journal article" date="2008" name="J. Proteome Res.">
        <title>Phosphoproteome analysis of fission yeast.</title>
        <authorList>
            <person name="Wilson-Grady J.T."/>
            <person name="Villen J."/>
            <person name="Gygi S.P."/>
        </authorList>
    </citation>
    <scope>PHOSPHORYLATION [LARGE SCALE ANALYSIS] AT THR-164</scope>
    <scope>IDENTIFICATION BY MASS SPECTROMETRY</scope>
</reference>
<gene>
    <name type="primary">ypt1</name>
    <name type="ORF">SPBC1703.10</name>
</gene>
<feature type="chain" id="PRO_0000121308" description="GTP-binding protein ypt1">
    <location>
        <begin position="1"/>
        <end position="203"/>
    </location>
</feature>
<feature type="short sequence motif" description="Effector region" evidence="5">
    <location>
        <begin position="37"/>
        <end position="45"/>
    </location>
</feature>
<feature type="binding site" evidence="2">
    <location>
        <begin position="15"/>
        <end position="23"/>
    </location>
    <ligand>
        <name>GTP</name>
        <dbReference type="ChEBI" id="CHEBI:37565"/>
    </ligand>
</feature>
<feature type="binding site" evidence="2">
    <location>
        <begin position="33"/>
        <end position="40"/>
    </location>
    <ligand>
        <name>GTP</name>
        <dbReference type="ChEBI" id="CHEBI:37565"/>
    </ligand>
</feature>
<feature type="binding site" evidence="2">
    <location>
        <begin position="63"/>
        <end position="67"/>
    </location>
    <ligand>
        <name>GTP</name>
        <dbReference type="ChEBI" id="CHEBI:37565"/>
    </ligand>
</feature>
<feature type="binding site" evidence="2">
    <location>
        <begin position="121"/>
        <end position="124"/>
    </location>
    <ligand>
        <name>GTP</name>
        <dbReference type="ChEBI" id="CHEBI:37565"/>
    </ligand>
</feature>
<feature type="binding site" evidence="2">
    <location>
        <begin position="151"/>
        <end position="153"/>
    </location>
    <ligand>
        <name>GTP</name>
        <dbReference type="ChEBI" id="CHEBI:37565"/>
    </ligand>
</feature>
<feature type="site" description="Not methylated" evidence="3">
    <location>
        <position position="203"/>
    </location>
</feature>
<feature type="modified residue" description="Phosphothreonine" evidence="4">
    <location>
        <position position="164"/>
    </location>
</feature>
<feature type="lipid moiety-binding region" description="S-geranylgeranyl cysteine" evidence="3">
    <location>
        <position position="202"/>
    </location>
</feature>
<feature type="lipid moiety-binding region" description="S-geranylgeranyl cysteine" evidence="3">
    <location>
        <position position="203"/>
    </location>
</feature>
<feature type="sequence conflict" description="In Ref. 2; CAA33192." evidence="5" ref="2">
    <original>MNPE</original>
    <variation>MNANINR</variation>
    <location>
        <begin position="1"/>
        <end position="4"/>
    </location>
</feature>
<dbReference type="EMBL" id="X52099">
    <property type="protein sequence ID" value="CAA36319.1"/>
    <property type="molecule type" value="Genomic_DNA"/>
</dbReference>
<dbReference type="EMBL" id="X15082">
    <property type="protein sequence ID" value="CAA33192.1"/>
    <property type="molecule type" value="Genomic_DNA"/>
</dbReference>
<dbReference type="EMBL" id="CU329671">
    <property type="protein sequence ID" value="CAB66454.1"/>
    <property type="molecule type" value="Genomic_DNA"/>
</dbReference>
<dbReference type="PIR" id="S04590">
    <property type="entry name" value="S04590"/>
</dbReference>
<dbReference type="PIR" id="T50323">
    <property type="entry name" value="T50323"/>
</dbReference>
<dbReference type="RefSeq" id="NP_596205.1">
    <property type="nucleotide sequence ID" value="NM_001022124.2"/>
</dbReference>
<dbReference type="SMR" id="P11620"/>
<dbReference type="BioGRID" id="276334">
    <property type="interactions" value="5"/>
</dbReference>
<dbReference type="FunCoup" id="P11620">
    <property type="interactions" value="818"/>
</dbReference>
<dbReference type="STRING" id="284812.P11620"/>
<dbReference type="iPTMnet" id="P11620"/>
<dbReference type="PaxDb" id="4896-SPBC1703.10.1"/>
<dbReference type="EnsemblFungi" id="SPBC1703.10.1">
    <property type="protein sequence ID" value="SPBC1703.10.1:pep"/>
    <property type="gene ID" value="SPBC1703.10"/>
</dbReference>
<dbReference type="GeneID" id="2539784"/>
<dbReference type="KEGG" id="spo:2539784"/>
<dbReference type="PomBase" id="SPBC1703.10">
    <property type="gene designation" value="ypt1"/>
</dbReference>
<dbReference type="VEuPathDB" id="FungiDB:SPBC1703.10"/>
<dbReference type="eggNOG" id="KOG0084">
    <property type="taxonomic scope" value="Eukaryota"/>
</dbReference>
<dbReference type="HOGENOM" id="CLU_041217_10_1_1"/>
<dbReference type="InParanoid" id="P11620"/>
<dbReference type="OMA" id="TQMAKDF"/>
<dbReference type="PhylomeDB" id="P11620"/>
<dbReference type="Reactome" id="R-SPO-162658">
    <property type="pathway name" value="Golgi Cisternae Pericentriolar Stack Reorganization"/>
</dbReference>
<dbReference type="Reactome" id="R-SPO-204005">
    <property type="pathway name" value="COPII-mediated vesicle transport"/>
</dbReference>
<dbReference type="Reactome" id="R-SPO-6807878">
    <property type="pathway name" value="COPI-mediated anterograde transport"/>
</dbReference>
<dbReference type="Reactome" id="R-SPO-6811434">
    <property type="pathway name" value="COPI-dependent Golgi-to-ER retrograde traffic"/>
</dbReference>
<dbReference type="Reactome" id="R-SPO-6811440">
    <property type="pathway name" value="Retrograde transport at the Trans-Golgi-Network"/>
</dbReference>
<dbReference type="Reactome" id="R-SPO-8873719">
    <property type="pathway name" value="RAB geranylgeranylation"/>
</dbReference>
<dbReference type="Reactome" id="R-SPO-8876198">
    <property type="pathway name" value="RAB GEFs exchange GTP for GDP on RABs"/>
</dbReference>
<dbReference type="PRO" id="PR:P11620"/>
<dbReference type="Proteomes" id="UP000002485">
    <property type="component" value="Chromosome II"/>
</dbReference>
<dbReference type="GO" id="GO:0005829">
    <property type="term" value="C:cytosol"/>
    <property type="evidence" value="ECO:0007005"/>
    <property type="project" value="PomBase"/>
</dbReference>
<dbReference type="GO" id="GO:0012505">
    <property type="term" value="C:endomembrane system"/>
    <property type="evidence" value="ECO:0000318"/>
    <property type="project" value="GO_Central"/>
</dbReference>
<dbReference type="GO" id="GO:0005789">
    <property type="term" value="C:endoplasmic reticulum membrane"/>
    <property type="evidence" value="ECO:0000266"/>
    <property type="project" value="PomBase"/>
</dbReference>
<dbReference type="GO" id="GO:0000139">
    <property type="term" value="C:Golgi membrane"/>
    <property type="evidence" value="ECO:0000266"/>
    <property type="project" value="PomBase"/>
</dbReference>
<dbReference type="GO" id="GO:0005634">
    <property type="term" value="C:nucleus"/>
    <property type="evidence" value="ECO:0007005"/>
    <property type="project" value="PomBase"/>
</dbReference>
<dbReference type="GO" id="GO:0034045">
    <property type="term" value="C:phagophore assembly site membrane"/>
    <property type="evidence" value="ECO:0007669"/>
    <property type="project" value="UniProtKB-SubCell"/>
</dbReference>
<dbReference type="GO" id="GO:0005525">
    <property type="term" value="F:GTP binding"/>
    <property type="evidence" value="ECO:0007669"/>
    <property type="project" value="UniProtKB-KW"/>
</dbReference>
<dbReference type="GO" id="GO:0003924">
    <property type="term" value="F:GTPase activity"/>
    <property type="evidence" value="ECO:0000316"/>
    <property type="project" value="PomBase"/>
</dbReference>
<dbReference type="GO" id="GO:0000045">
    <property type="term" value="P:autophagosome assembly"/>
    <property type="evidence" value="ECO:0000318"/>
    <property type="project" value="GO_Central"/>
</dbReference>
<dbReference type="GO" id="GO:0006888">
    <property type="term" value="P:endoplasmic reticulum to Golgi vesicle-mediated transport"/>
    <property type="evidence" value="ECO:0000266"/>
    <property type="project" value="PomBase"/>
</dbReference>
<dbReference type="GO" id="GO:0006886">
    <property type="term" value="P:intracellular protein transport"/>
    <property type="evidence" value="ECO:0000318"/>
    <property type="project" value="GO_Central"/>
</dbReference>
<dbReference type="CDD" id="cd01869">
    <property type="entry name" value="Rab1_Ypt1"/>
    <property type="match status" value="1"/>
</dbReference>
<dbReference type="FunFam" id="3.40.50.300:FF:000069">
    <property type="entry name" value="Ras GTP-binding protein YPT1"/>
    <property type="match status" value="1"/>
</dbReference>
<dbReference type="Gene3D" id="3.40.50.300">
    <property type="entry name" value="P-loop containing nucleotide triphosphate hydrolases"/>
    <property type="match status" value="1"/>
</dbReference>
<dbReference type="InterPro" id="IPR027417">
    <property type="entry name" value="P-loop_NTPase"/>
</dbReference>
<dbReference type="InterPro" id="IPR050227">
    <property type="entry name" value="Rab"/>
</dbReference>
<dbReference type="InterPro" id="IPR005225">
    <property type="entry name" value="Small_GTP-bd"/>
</dbReference>
<dbReference type="InterPro" id="IPR001806">
    <property type="entry name" value="Small_GTPase"/>
</dbReference>
<dbReference type="NCBIfam" id="TIGR00231">
    <property type="entry name" value="small_GTP"/>
    <property type="match status" value="1"/>
</dbReference>
<dbReference type="PANTHER" id="PTHR47977">
    <property type="entry name" value="RAS-RELATED PROTEIN RAB"/>
    <property type="match status" value="1"/>
</dbReference>
<dbReference type="Pfam" id="PF00071">
    <property type="entry name" value="Ras"/>
    <property type="match status" value="1"/>
</dbReference>
<dbReference type="PRINTS" id="PR00449">
    <property type="entry name" value="RASTRNSFRMNG"/>
</dbReference>
<dbReference type="SMART" id="SM00175">
    <property type="entry name" value="RAB"/>
    <property type="match status" value="1"/>
</dbReference>
<dbReference type="SMART" id="SM00176">
    <property type="entry name" value="RAN"/>
    <property type="match status" value="1"/>
</dbReference>
<dbReference type="SMART" id="SM00173">
    <property type="entry name" value="RAS"/>
    <property type="match status" value="1"/>
</dbReference>
<dbReference type="SMART" id="SM00174">
    <property type="entry name" value="RHO"/>
    <property type="match status" value="1"/>
</dbReference>
<dbReference type="SUPFAM" id="SSF52540">
    <property type="entry name" value="P-loop containing nucleoside triphosphate hydrolases"/>
    <property type="match status" value="1"/>
</dbReference>
<dbReference type="PROSITE" id="PS51419">
    <property type="entry name" value="RAB"/>
    <property type="match status" value="1"/>
</dbReference>
<keyword id="KW-0072">Autophagy</keyword>
<keyword id="KW-0963">Cytoplasm</keyword>
<keyword id="KW-0256">Endoplasmic reticulum</keyword>
<keyword id="KW-0333">Golgi apparatus</keyword>
<keyword id="KW-0342">GTP-binding</keyword>
<keyword id="KW-0449">Lipoprotein</keyword>
<keyword id="KW-0472">Membrane</keyword>
<keyword id="KW-0547">Nucleotide-binding</keyword>
<keyword id="KW-0597">Phosphoprotein</keyword>
<keyword id="KW-0636">Prenylation</keyword>
<keyword id="KW-0653">Protein transport</keyword>
<keyword id="KW-1185">Reference proteome</keyword>
<keyword id="KW-0813">Transport</keyword>
<sequence>MNPEYDYLFKLLLIGDSGVGKSCLLLRFADDTYTESYISTIGVDFKIRTFELEGKTVKLQIWDTAGQERFRTITSSYYRGAHGIIIVYDVTDQDSFNNVKQWLQEIDRYAVEGVNRLLVGNKSDMVDKKVVEYSVAKEFADSLNIPFLETSAKDSTNVEQAFLTMSRQIKERMGNNTFASSNAKSSVKVGQGTNVSQSSSNCC</sequence>
<evidence type="ECO:0000250" key="1">
    <source>
        <dbReference type="UniProtKB" id="P01123"/>
    </source>
</evidence>
<evidence type="ECO:0000250" key="2">
    <source>
        <dbReference type="UniProtKB" id="P62820"/>
    </source>
</evidence>
<evidence type="ECO:0000269" key="3">
    <source>
    </source>
</evidence>
<evidence type="ECO:0000269" key="4">
    <source>
    </source>
</evidence>
<evidence type="ECO:0000305" key="5"/>
<comment type="function">
    <text evidence="1">The small GTPases Rab are key regulators of intracellular membrane trafficking, from the formation of transport vesicles to their fusion with membranes. Rabs cycle between an inactive GDP-bound form and an active GTP-bound form that is able to recruit to membranes different set of downstream effectors directly responsible for vesicle formation, movement, tethering and fusion. Ypt1 regulates the trafficking of secretory vesicles from the endoplasmic reticulum (ER) to the Golgi. Plays a role in the initial events of the autophagic vacuole development which take place at specialized regions of the endoplasmic reticulum. Also involved in the recycling of membrane proteins.</text>
</comment>
<comment type="activity regulation">
    <text evidence="5">Rab activation is generally mediated by a guanine exchange factor (GEF), while inactivation through hydrolysis of bound GTP is catalyzed by a GTPase activating protein (GAP).</text>
</comment>
<comment type="subcellular location">
    <subcellularLocation>
        <location evidence="1">Endoplasmic reticulum membrane</location>
        <topology evidence="1">Peripheral membrane protein</topology>
    </subcellularLocation>
    <subcellularLocation>
        <location evidence="1">Golgi apparatus membrane</location>
        <topology evidence="1">Peripheral membrane protein</topology>
    </subcellularLocation>
    <subcellularLocation>
        <location evidence="1">Cytoplasm</location>
    </subcellularLocation>
    <subcellularLocation>
        <location evidence="1">Preautophagosomal structure membrane</location>
        <topology evidence="5">Lipid-anchor</topology>
        <orientation evidence="5">Cytoplasmic side</orientation>
    </subcellularLocation>
</comment>
<comment type="similarity">
    <text evidence="5">Belongs to the small GTPase superfamily. Rab family.</text>
</comment>
<protein>
    <recommendedName>
        <fullName>GTP-binding protein ypt1</fullName>
    </recommendedName>
</protein>
<accession>P11620</accession>
<name>YPT1_SCHPO</name>
<proteinExistence type="evidence at protein level"/>
<organism>
    <name type="scientific">Schizosaccharomyces pombe (strain 972 / ATCC 24843)</name>
    <name type="common">Fission yeast</name>
    <dbReference type="NCBI Taxonomy" id="284812"/>
    <lineage>
        <taxon>Eukaryota</taxon>
        <taxon>Fungi</taxon>
        <taxon>Dikarya</taxon>
        <taxon>Ascomycota</taxon>
        <taxon>Taphrinomycotina</taxon>
        <taxon>Schizosaccharomycetes</taxon>
        <taxon>Schizosaccharomycetales</taxon>
        <taxon>Schizosaccharomycetaceae</taxon>
        <taxon>Schizosaccharomyces</taxon>
    </lineage>
</organism>